<proteinExistence type="inferred from homology"/>
<reference key="1">
    <citation type="journal article" date="1990" name="Nucleic Acids Res.">
        <title>Complete nucleotide sequence of the genome of Spiroplasma citri virus SpV1-R8A2 B.</title>
        <authorList>
            <person name="Renaudin J."/>
            <person name="Aullo P."/>
            <person name="Vignault J.C."/>
            <person name="Bove J.M."/>
        </authorList>
    </citation>
    <scope>NUCLEOTIDE SEQUENCE [GENOMIC DNA]</scope>
</reference>
<feature type="chain" id="PRO_0000065791" description="Uncharacterized protein ORF2">
    <location>
        <begin position="1"/>
        <end position="337"/>
    </location>
</feature>
<feature type="transmembrane region" description="Helical" evidence="1">
    <location>
        <begin position="4"/>
        <end position="24"/>
    </location>
</feature>
<feature type="transmembrane region" description="Helical" evidence="1">
    <location>
        <begin position="26"/>
        <end position="46"/>
    </location>
</feature>
<evidence type="ECO:0000255" key="1"/>
<evidence type="ECO:0000305" key="2"/>
<dbReference type="EMBL" id="X51344">
    <property type="protein sequence ID" value="CAA35725.2"/>
    <property type="molecule type" value="Genomic_DNA"/>
</dbReference>
<dbReference type="RefSeq" id="NP_040337.2">
    <property type="nucleotide sequence ID" value="NC_001365.1"/>
</dbReference>
<dbReference type="KEGG" id="vg:1260864"/>
<dbReference type="OrthoDB" id="5989at10239"/>
<dbReference type="Proteomes" id="UP000001252">
    <property type="component" value="Segment"/>
</dbReference>
<dbReference type="GO" id="GO:0033644">
    <property type="term" value="C:host cell membrane"/>
    <property type="evidence" value="ECO:0007669"/>
    <property type="project" value="UniProtKB-SubCell"/>
</dbReference>
<dbReference type="GO" id="GO:0016020">
    <property type="term" value="C:membrane"/>
    <property type="evidence" value="ECO:0007669"/>
    <property type="project" value="UniProtKB-KW"/>
</dbReference>
<dbReference type="Gene3D" id="3.40.50.300">
    <property type="entry name" value="P-loop containing nucleotide triphosphate hydrolases"/>
    <property type="match status" value="1"/>
</dbReference>
<dbReference type="InterPro" id="IPR027417">
    <property type="entry name" value="P-loop_NTPase"/>
</dbReference>
<keyword id="KW-1043">Host membrane</keyword>
<keyword id="KW-0472">Membrane</keyword>
<keyword id="KW-1185">Reference proteome</keyword>
<keyword id="KW-0812">Transmembrane</keyword>
<keyword id="KW-1133">Transmembrane helix</keyword>
<gene>
    <name type="ORF">ORF2</name>
</gene>
<name>ORF2_SPV1R</name>
<protein>
    <recommendedName>
        <fullName>Uncharacterized protein ORF2</fullName>
    </recommendedName>
    <alternativeName>
        <fullName>Gene 2 protein</fullName>
    </alternativeName>
</protein>
<organism>
    <name type="scientific">Spiroplasma virus SpV1-R8A2 B</name>
    <name type="common">SpV1</name>
    <name type="synonym">Spiroplasma virus 1</name>
    <dbReference type="NCBI Taxonomy" id="10854"/>
    <lineage>
        <taxon>Viruses</taxon>
        <taxon>Monodnaviria</taxon>
        <taxon>Loebvirae</taxon>
        <taxon>Hofneiviricota</taxon>
        <taxon>Faserviricetes</taxon>
        <taxon>Tubulavirales</taxon>
        <taxon>Plectroviridae</taxon>
        <taxon>Vespertiliovirus</taxon>
        <taxon>Vespertiliovirus R8A2B</taxon>
    </lineage>
</organism>
<comment type="subcellular location">
    <subcellularLocation>
        <location evidence="2">Host membrane</location>
        <topology evidence="2">Multi-pass membrane protein</topology>
    </subcellularLocation>
</comment>
<comment type="similarity">
    <text evidence="2">Belongs to the plectrovirus ORF2 family.</text>
</comment>
<accession>P15893</accession>
<organismHost>
    <name type="scientific">Spiroplasma citri</name>
    <dbReference type="NCBI Taxonomy" id="2133"/>
</organismHost>
<sequence length="337" mass="39809">MKKFIFFFKNYCYISGSMLLFSLIDLLLWIISLYCVGLVFWILFVLQCIYFVWWLWKNIFYQLNSFGLVNFVWDNPLSVIIGKLGTGKTLLLTYLSQTMKLLTDEIYSNYPLEDDKVKVLTFKNLDFTDRTKPVPPDDSVILFDESYLYIDGTSPHDEKKVHSGKIPWIVLARHFGNRALFTAQREGMIWNNIRQLASGIIIPISLKKPVIKKGFNFFNRFFIMQIGIFQDITDYEIWKTKSVERTAEGKRVKHKSDVGLGIRFFKIIIPLEFANKYDSQWLKFVRDLKNDEIVNKKEYYWSEITKLSVKERLELFDIDILKKNLKPKKEKGNGKDD</sequence>